<reference key="1">
    <citation type="journal article" date="2007" name="Microbiology">
        <title>Comparative analysis of the Corynebacterium glutamicum group and complete genome sequence of strain R.</title>
        <authorList>
            <person name="Yukawa H."/>
            <person name="Omumasaba C.A."/>
            <person name="Nonaka H."/>
            <person name="Kos P."/>
            <person name="Okai N."/>
            <person name="Suzuki N."/>
            <person name="Suda M."/>
            <person name="Tsuge Y."/>
            <person name="Watanabe J."/>
            <person name="Ikeda Y."/>
            <person name="Vertes A.A."/>
            <person name="Inui M."/>
        </authorList>
    </citation>
    <scope>NUCLEOTIDE SEQUENCE [LARGE SCALE GENOMIC DNA]</scope>
    <source>
        <strain>R</strain>
    </source>
</reference>
<gene>
    <name evidence="1" type="primary">larC</name>
    <name type="ordered locus">cgR_2381</name>
</gene>
<evidence type="ECO:0000255" key="1">
    <source>
        <dbReference type="HAMAP-Rule" id="MF_01074"/>
    </source>
</evidence>
<name>LARC_CORGB</name>
<keyword id="KW-0456">Lyase</keyword>
<keyword id="KW-0533">Nickel</keyword>
<comment type="function">
    <text evidence="1">Involved in the biosynthesis of a nickel-pincer cofactor ((SCS)Ni(II) pincer complex). Binds Ni(2+), and functions in nickel delivery to pyridinium-3,5-bisthiocarboxylic acid mononucleotide (P2TMN), to form the mature cofactor. Is thus probably required for the activation of nickel-pincer cofactor-dependent enzymes.</text>
</comment>
<comment type="catalytic activity">
    <reaction evidence="1">
        <text>Ni(II)-pyridinium-3,5-bisthiocarboxylate mononucleotide = pyridinium-3,5-bisthiocarboxylate mononucleotide + Ni(2+)</text>
        <dbReference type="Rhea" id="RHEA:54784"/>
        <dbReference type="ChEBI" id="CHEBI:49786"/>
        <dbReference type="ChEBI" id="CHEBI:137372"/>
        <dbReference type="ChEBI" id="CHEBI:137373"/>
        <dbReference type="EC" id="4.99.1.12"/>
    </reaction>
</comment>
<comment type="similarity">
    <text evidence="1">Belongs to the LarC family.</text>
</comment>
<dbReference type="EC" id="4.99.1.12" evidence="1"/>
<dbReference type="EMBL" id="AP009044">
    <property type="protein sequence ID" value="BAF55388.1"/>
    <property type="molecule type" value="Genomic_DNA"/>
</dbReference>
<dbReference type="RefSeq" id="WP_011897772.1">
    <property type="nucleotide sequence ID" value="NC_009342.1"/>
</dbReference>
<dbReference type="SMR" id="A4QGM2"/>
<dbReference type="KEGG" id="cgt:cgR_2381"/>
<dbReference type="HOGENOM" id="CLU_028523_2_1_11"/>
<dbReference type="PhylomeDB" id="A4QGM2"/>
<dbReference type="Proteomes" id="UP000006698">
    <property type="component" value="Chromosome"/>
</dbReference>
<dbReference type="GO" id="GO:0016829">
    <property type="term" value="F:lyase activity"/>
    <property type="evidence" value="ECO:0007669"/>
    <property type="project" value="UniProtKB-UniRule"/>
</dbReference>
<dbReference type="GO" id="GO:0016151">
    <property type="term" value="F:nickel cation binding"/>
    <property type="evidence" value="ECO:0007669"/>
    <property type="project" value="UniProtKB-UniRule"/>
</dbReference>
<dbReference type="GO" id="GO:0051604">
    <property type="term" value="P:protein maturation"/>
    <property type="evidence" value="ECO:0007669"/>
    <property type="project" value="UniProtKB-UniRule"/>
</dbReference>
<dbReference type="Gene3D" id="3.10.20.300">
    <property type="entry name" value="mk0293 like domain"/>
    <property type="match status" value="1"/>
</dbReference>
<dbReference type="Gene3D" id="3.30.70.1380">
    <property type="entry name" value="Transcriptional regulatory protein pf0864 domain like"/>
    <property type="match status" value="1"/>
</dbReference>
<dbReference type="HAMAP" id="MF_01074">
    <property type="entry name" value="LarC"/>
    <property type="match status" value="1"/>
</dbReference>
<dbReference type="InterPro" id="IPR002822">
    <property type="entry name" value="Ni_insertion"/>
</dbReference>
<dbReference type="NCBIfam" id="TIGR00299">
    <property type="entry name" value="nickel pincer cofactor biosynthesis protein LarC"/>
    <property type="match status" value="1"/>
</dbReference>
<dbReference type="PANTHER" id="PTHR36566">
    <property type="entry name" value="NICKEL INSERTION PROTEIN-RELATED"/>
    <property type="match status" value="1"/>
</dbReference>
<dbReference type="PANTHER" id="PTHR36566:SF1">
    <property type="entry name" value="PYRIDINIUM-3,5-BISTHIOCARBOXYLIC ACID MONONUCLEOTIDE NICKEL INSERTION PROTEIN"/>
    <property type="match status" value="1"/>
</dbReference>
<dbReference type="Pfam" id="PF01969">
    <property type="entry name" value="Ni_insertion"/>
    <property type="match status" value="1"/>
</dbReference>
<organism>
    <name type="scientific">Corynebacterium glutamicum (strain R)</name>
    <dbReference type="NCBI Taxonomy" id="340322"/>
    <lineage>
        <taxon>Bacteria</taxon>
        <taxon>Bacillati</taxon>
        <taxon>Actinomycetota</taxon>
        <taxon>Actinomycetes</taxon>
        <taxon>Mycobacteriales</taxon>
        <taxon>Corynebacteriaceae</taxon>
        <taxon>Corynebacterium</taxon>
    </lineage>
</organism>
<feature type="chain" id="PRO_1000064646" description="Pyridinium-3,5-bisthiocarboxylic acid mononucleotide nickel insertion protein">
    <location>
        <begin position="1"/>
        <end position="397"/>
    </location>
</feature>
<accession>A4QGM2</accession>
<proteinExistence type="inferred from homology"/>
<protein>
    <recommendedName>
        <fullName evidence="1">Pyridinium-3,5-bisthiocarboxylic acid mononucleotide nickel insertion protein</fullName>
        <shortName evidence="1">P2TMN nickel insertion protein</shortName>
        <ecNumber evidence="1">4.99.1.12</ecNumber>
    </recommendedName>
    <alternativeName>
        <fullName evidence="1">Nickel-pincer cofactor biosynthesis protein LarC</fullName>
    </alternativeName>
</protein>
<sequence>MGLWIDATAGVAGDMLLGALIDAGAELEKIQQVVEAVIPGDVLLRAEEVVRQGQRGIKLHVEAQHEHHHHRHLSTIKELLVNADIPEQTKQDALGVFELIAIAEGKVHGIDPEKIHFHEVGAWDSIADIVGVCEAIRQLNPGLIAASPIALGFGRIKAAHGDIPVPVPAVAELVKGWPTQTGALMESTEPVGELATPTGVALIRHFATQDGPFPGGIINEVGIGAGTKDTAGRPNVVRAVLFSTSGKAASNPDTRTLVQLEANVDDQDPRLWTGVIESLLVAGAVDAWLTPILMKKGRPAHTVSALVDSSAVEAVKTALFASTTTFGIRSWEVEREGLDRRFEQVEVDGHTINIKIGSRNGHDISAQPEFEDIRSAAVALGISEREVVARIPQGTTE</sequence>